<proteinExistence type="inferred from homology"/>
<sequence length="377" mass="43311">MDLKELFDLNLCLRCTGRIFAAVDTGLTNEERGARLYFAYKSIYGERDVPESCYLCNGVFKKFDEFFNILMSKLNNYEFNSILVGSTFDENIIEMEKDIQSRFGSKGESIKKEFNREFGKYLSKRLGKPFSKDADLTIEVDALYENVNIIVKPVYIYGVYIKKSRDISQTRWIHKTGESIESIIGNELRSMTGCENYYLHGSGREDVDVMMLGNGREFVIEAAMPKRRYIDLYELQLRVNASGILFIYNLSYSSKATVRRIKSELHEKLYIAEVTGDLNKDIKKACSKFNNLIIEQRTPLRVINHRSDLVRRKKINYINIISIMNGRALLKICAEAGTYIKELVNGDNGRTVPSLSSVYGSQLQVSSLDVVKIYRDD</sequence>
<dbReference type="EC" id="5.4.99.25" evidence="1"/>
<dbReference type="EMBL" id="AE017261">
    <property type="protein sequence ID" value="AAT42975.1"/>
    <property type="molecule type" value="Genomic_DNA"/>
</dbReference>
<dbReference type="RefSeq" id="WP_011177191.1">
    <property type="nucleotide sequence ID" value="NC_005877.1"/>
</dbReference>
<dbReference type="SMR" id="Q6L227"/>
<dbReference type="STRING" id="263820.PTO0390"/>
<dbReference type="PaxDb" id="263820-PTO0390"/>
<dbReference type="GeneID" id="2843974"/>
<dbReference type="KEGG" id="pto:PTO0390"/>
<dbReference type="PATRIC" id="fig|263820.9.peg.414"/>
<dbReference type="eggNOG" id="arCOG01015">
    <property type="taxonomic scope" value="Archaea"/>
</dbReference>
<dbReference type="HOGENOM" id="CLU_028780_2_0_2"/>
<dbReference type="InParanoid" id="Q6L227"/>
<dbReference type="OrthoDB" id="10348at2157"/>
<dbReference type="Proteomes" id="UP000000438">
    <property type="component" value="Chromosome"/>
</dbReference>
<dbReference type="GO" id="GO:0000049">
    <property type="term" value="F:tRNA binding"/>
    <property type="evidence" value="ECO:0007669"/>
    <property type="project" value="InterPro"/>
</dbReference>
<dbReference type="GO" id="GO:0160148">
    <property type="term" value="F:tRNA pseudouridine(55) synthase activity"/>
    <property type="evidence" value="ECO:0007669"/>
    <property type="project" value="UniProtKB-EC"/>
</dbReference>
<dbReference type="GO" id="GO:0031119">
    <property type="term" value="P:tRNA pseudouridine synthesis"/>
    <property type="evidence" value="ECO:0007669"/>
    <property type="project" value="UniProtKB-UniRule"/>
</dbReference>
<dbReference type="Gene3D" id="3.30.70.2510">
    <property type="match status" value="1"/>
</dbReference>
<dbReference type="Gene3D" id="3.30.70.3190">
    <property type="match status" value="1"/>
</dbReference>
<dbReference type="HAMAP" id="MF_01893">
    <property type="entry name" value="Pus10_arch"/>
    <property type="match status" value="1"/>
</dbReference>
<dbReference type="InterPro" id="IPR020103">
    <property type="entry name" value="PsdUridine_synth_cat_dom_sf"/>
</dbReference>
<dbReference type="InterPro" id="IPR005912">
    <property type="entry name" value="Pus10"/>
</dbReference>
<dbReference type="InterPro" id="IPR039894">
    <property type="entry name" value="Pus10-like"/>
</dbReference>
<dbReference type="InterPro" id="IPR048741">
    <property type="entry name" value="Pus10-like_C"/>
</dbReference>
<dbReference type="InterPro" id="IPR055174">
    <property type="entry name" value="Pus10_THUMP_arc"/>
</dbReference>
<dbReference type="NCBIfam" id="TIGR01213">
    <property type="entry name" value="pseudo_Pus10arc"/>
    <property type="match status" value="1"/>
</dbReference>
<dbReference type="PANTHER" id="PTHR21568">
    <property type="entry name" value="TRNA PSEUDOURIDINE SYNTHASE PUS10"/>
    <property type="match status" value="1"/>
</dbReference>
<dbReference type="PANTHER" id="PTHR21568:SF0">
    <property type="entry name" value="TRNA PSEUDOURIDINE SYNTHASE PUS10"/>
    <property type="match status" value="1"/>
</dbReference>
<dbReference type="Pfam" id="PF21238">
    <property type="entry name" value="Pus10_C"/>
    <property type="match status" value="1"/>
</dbReference>
<dbReference type="Pfam" id="PF22023">
    <property type="entry name" value="Pus10_THUMP_arc"/>
    <property type="match status" value="1"/>
</dbReference>
<dbReference type="SUPFAM" id="SSF55120">
    <property type="entry name" value="Pseudouridine synthase"/>
    <property type="match status" value="1"/>
</dbReference>
<keyword id="KW-0413">Isomerase</keyword>
<keyword id="KW-0694">RNA-binding</keyword>
<keyword id="KW-0819">tRNA processing</keyword>
<reference key="1">
    <citation type="journal article" date="2004" name="Proc. Natl. Acad. Sci. U.S.A.">
        <title>Genome sequence of Picrophilus torridus and its implications for life around pH 0.</title>
        <authorList>
            <person name="Fuetterer O."/>
            <person name="Angelov A."/>
            <person name="Liesegang H."/>
            <person name="Gottschalk G."/>
            <person name="Schleper C."/>
            <person name="Schepers B."/>
            <person name="Dock C."/>
            <person name="Antranikian G."/>
            <person name="Liebl W."/>
        </authorList>
    </citation>
    <scope>NUCLEOTIDE SEQUENCE [LARGE SCALE GENOMIC DNA]</scope>
    <source>
        <strain>ATCC 700027 / DSM 9790 / JCM 10055 / NBRC 100828 / KAW 2/3</strain>
    </source>
</reference>
<name>PUS10_PICTO</name>
<evidence type="ECO:0000255" key="1">
    <source>
        <dbReference type="HAMAP-Rule" id="MF_01893"/>
    </source>
</evidence>
<comment type="function">
    <text evidence="1">Responsible for synthesis of pseudouridine from uracil-54 and uracil-55 in the psi GC loop of transfer RNAs.</text>
</comment>
<comment type="catalytic activity">
    <reaction evidence="1">
        <text>uridine(54) in tRNA = pseudouridine(54) in tRNA</text>
        <dbReference type="Rhea" id="RHEA:57876"/>
        <dbReference type="Rhea" id="RHEA-COMP:10193"/>
        <dbReference type="Rhea" id="RHEA-COMP:14141"/>
        <dbReference type="ChEBI" id="CHEBI:65314"/>
        <dbReference type="ChEBI" id="CHEBI:65315"/>
    </reaction>
</comment>
<comment type="catalytic activity">
    <reaction evidence="1">
        <text>uridine(55) in tRNA = pseudouridine(55) in tRNA</text>
        <dbReference type="Rhea" id="RHEA:42532"/>
        <dbReference type="Rhea" id="RHEA-COMP:10101"/>
        <dbReference type="Rhea" id="RHEA-COMP:10102"/>
        <dbReference type="ChEBI" id="CHEBI:65314"/>
        <dbReference type="ChEBI" id="CHEBI:65315"/>
        <dbReference type="EC" id="5.4.99.25"/>
    </reaction>
</comment>
<comment type="similarity">
    <text evidence="1">Belongs to the pseudouridine synthase Pus10 family.</text>
</comment>
<protein>
    <recommendedName>
        <fullName evidence="1">tRNA pseudouridine synthase Pus10</fullName>
        <ecNumber evidence="1">5.4.99.25</ecNumber>
    </recommendedName>
    <alternativeName>
        <fullName evidence="1">tRNA pseudouridine 54/55 synthase</fullName>
        <shortName evidence="1">Psi54/55 synthase</shortName>
    </alternativeName>
</protein>
<organism>
    <name type="scientific">Picrophilus torridus (strain ATCC 700027 / DSM 9790 / JCM 10055 / NBRC 100828 / KAW 2/3)</name>
    <dbReference type="NCBI Taxonomy" id="1122961"/>
    <lineage>
        <taxon>Archaea</taxon>
        <taxon>Methanobacteriati</taxon>
        <taxon>Thermoplasmatota</taxon>
        <taxon>Thermoplasmata</taxon>
        <taxon>Thermoplasmatales</taxon>
        <taxon>Picrophilaceae</taxon>
        <taxon>Picrophilus</taxon>
    </lineage>
</organism>
<gene>
    <name evidence="1" type="primary">pus10</name>
    <name type="ordered locus">PTO0390</name>
</gene>
<accession>Q6L227</accession>
<feature type="chain" id="PRO_0000407394" description="tRNA pseudouridine synthase Pus10">
    <location>
        <begin position="1"/>
        <end position="377"/>
    </location>
</feature>
<feature type="active site" description="Nucleophile" evidence="1">
    <location>
        <position position="206"/>
    </location>
</feature>
<feature type="binding site" evidence="1">
    <location>
        <position position="270"/>
    </location>
    <ligand>
        <name>substrate</name>
    </ligand>
</feature>
<feature type="binding site" evidence="1">
    <location>
        <position position="339"/>
    </location>
    <ligand>
        <name>substrate</name>
    </ligand>
</feature>